<evidence type="ECO:0000255" key="1">
    <source>
        <dbReference type="HAMAP-Rule" id="MF_00038"/>
    </source>
</evidence>
<comment type="function">
    <text evidence="1">Catalyzes the initial step of the lipid cycle reactions in the biosynthesis of the cell wall peptidoglycan: transfers peptidoglycan precursor phospho-MurNAc-pentapeptide from UDP-MurNAc-pentapeptide onto the lipid carrier undecaprenyl phosphate, yielding undecaprenyl-pyrophosphoryl-MurNAc-pentapeptide, known as lipid I.</text>
</comment>
<comment type="catalytic activity">
    <reaction evidence="1">
        <text>UDP-N-acetyl-alpha-D-muramoyl-L-alanyl-gamma-D-glutamyl-L-lysyl-D-alanyl-D-alanine + di-trans,octa-cis-undecaprenyl phosphate = Mur2Ac(oyl-L-Ala-gamma-D-Glu-L-Lys-D-Ala-D-Ala)-di-trans,octa-cis-undecaprenyl diphosphate + UMP</text>
        <dbReference type="Rhea" id="RHEA:21920"/>
        <dbReference type="ChEBI" id="CHEBI:57865"/>
        <dbReference type="ChEBI" id="CHEBI:60032"/>
        <dbReference type="ChEBI" id="CHEBI:60392"/>
        <dbReference type="ChEBI" id="CHEBI:70758"/>
        <dbReference type="EC" id="2.7.8.13"/>
    </reaction>
</comment>
<comment type="cofactor">
    <cofactor evidence="1">
        <name>Mg(2+)</name>
        <dbReference type="ChEBI" id="CHEBI:18420"/>
    </cofactor>
</comment>
<comment type="pathway">
    <text evidence="1">Cell wall biogenesis; peptidoglycan biosynthesis.</text>
</comment>
<comment type="subcellular location">
    <subcellularLocation>
        <location evidence="1">Cell membrane</location>
        <topology evidence="1">Multi-pass membrane protein</topology>
    </subcellularLocation>
</comment>
<comment type="similarity">
    <text evidence="1">Belongs to the glycosyltransferase 4 family. MraY subfamily.</text>
</comment>
<keyword id="KW-0131">Cell cycle</keyword>
<keyword id="KW-0132">Cell division</keyword>
<keyword id="KW-1003">Cell membrane</keyword>
<keyword id="KW-0133">Cell shape</keyword>
<keyword id="KW-0961">Cell wall biogenesis/degradation</keyword>
<keyword id="KW-0460">Magnesium</keyword>
<keyword id="KW-0472">Membrane</keyword>
<keyword id="KW-0479">Metal-binding</keyword>
<keyword id="KW-0573">Peptidoglycan synthesis</keyword>
<keyword id="KW-1185">Reference proteome</keyword>
<keyword id="KW-0808">Transferase</keyword>
<keyword id="KW-0812">Transmembrane</keyword>
<keyword id="KW-1133">Transmembrane helix</keyword>
<organism>
    <name type="scientific">Streptococcus pneumoniae serotype 2 (strain D39 / NCTC 7466)</name>
    <dbReference type="NCBI Taxonomy" id="373153"/>
    <lineage>
        <taxon>Bacteria</taxon>
        <taxon>Bacillati</taxon>
        <taxon>Bacillota</taxon>
        <taxon>Bacilli</taxon>
        <taxon>Lactobacillales</taxon>
        <taxon>Streptococcaceae</taxon>
        <taxon>Streptococcus</taxon>
    </lineage>
</organism>
<sequence length="326" mass="36063">MFISISAGIVTFLLTLVGIPAFIQFYRKAQITGQQMHEDVKQHQAKAGTPTMGGLVFLITSVLVAFFFALFSSQFSNNVGMILFILVLYGLVGFLDDFLKVFRKINEGLNPKQKLALQLLGGVIFYLFYERGGDILSVFGYPVHLGFFYIFFALFWLVGFSNAVNLTDGVDGLASISVVISLFAYGVIAYVQGQMDILLVILAMIGGLLGFFIFNHKPAKVFMGDVGSLALGGMLAAISMALHQEWTLLIIGIVYVFETTSVMMQVSYFKLTGGKRIFRMTPVHHHFELGGLSGKGNPWSEWKVDFFFWGVGLLASLLTLAILYLM</sequence>
<name>MRAY_STRP2</name>
<feature type="chain" id="PRO_1000003072" description="Phospho-N-acetylmuramoyl-pentapeptide-transferase">
    <location>
        <begin position="1"/>
        <end position="326"/>
    </location>
</feature>
<feature type="transmembrane region" description="Helical" evidence="1">
    <location>
        <begin position="3"/>
        <end position="23"/>
    </location>
</feature>
<feature type="transmembrane region" description="Helical" evidence="1">
    <location>
        <begin position="51"/>
        <end position="71"/>
    </location>
</feature>
<feature type="transmembrane region" description="Helical" evidence="1">
    <location>
        <begin position="79"/>
        <end position="99"/>
    </location>
</feature>
<feature type="transmembrane region" description="Helical" evidence="1">
    <location>
        <begin position="115"/>
        <end position="135"/>
    </location>
</feature>
<feature type="transmembrane region" description="Helical" evidence="1">
    <location>
        <begin position="138"/>
        <end position="158"/>
    </location>
</feature>
<feature type="transmembrane region" description="Helical" evidence="1">
    <location>
        <begin position="169"/>
        <end position="189"/>
    </location>
</feature>
<feature type="transmembrane region" description="Helical" evidence="1">
    <location>
        <begin position="195"/>
        <end position="215"/>
    </location>
</feature>
<feature type="transmembrane region" description="Helical" evidence="1">
    <location>
        <begin position="221"/>
        <end position="243"/>
    </location>
</feature>
<feature type="transmembrane region" description="Helical" evidence="1">
    <location>
        <begin position="306"/>
        <end position="326"/>
    </location>
</feature>
<dbReference type="EC" id="2.7.8.13" evidence="1"/>
<dbReference type="EMBL" id="CP000410">
    <property type="protein sequence ID" value="ABJ54244.1"/>
    <property type="molecule type" value="Genomic_DNA"/>
</dbReference>
<dbReference type="RefSeq" id="WP_000470833.1">
    <property type="nucleotide sequence ID" value="NZ_JAMLJR010000002.1"/>
</dbReference>
<dbReference type="SMR" id="Q04MC4"/>
<dbReference type="PaxDb" id="373153-SPD_0307"/>
<dbReference type="KEGG" id="spd:SPD_0307"/>
<dbReference type="eggNOG" id="COG0472">
    <property type="taxonomic scope" value="Bacteria"/>
</dbReference>
<dbReference type="HOGENOM" id="CLU_023982_0_1_9"/>
<dbReference type="BioCyc" id="SPNE373153:G1G6V-339-MONOMER"/>
<dbReference type="UniPathway" id="UPA00219"/>
<dbReference type="Proteomes" id="UP000001452">
    <property type="component" value="Chromosome"/>
</dbReference>
<dbReference type="GO" id="GO:0005886">
    <property type="term" value="C:plasma membrane"/>
    <property type="evidence" value="ECO:0007669"/>
    <property type="project" value="UniProtKB-SubCell"/>
</dbReference>
<dbReference type="GO" id="GO:0046872">
    <property type="term" value="F:metal ion binding"/>
    <property type="evidence" value="ECO:0007669"/>
    <property type="project" value="UniProtKB-KW"/>
</dbReference>
<dbReference type="GO" id="GO:0008963">
    <property type="term" value="F:phospho-N-acetylmuramoyl-pentapeptide-transferase activity"/>
    <property type="evidence" value="ECO:0007669"/>
    <property type="project" value="UniProtKB-UniRule"/>
</dbReference>
<dbReference type="GO" id="GO:0051301">
    <property type="term" value="P:cell division"/>
    <property type="evidence" value="ECO:0007669"/>
    <property type="project" value="UniProtKB-KW"/>
</dbReference>
<dbReference type="GO" id="GO:0071555">
    <property type="term" value="P:cell wall organization"/>
    <property type="evidence" value="ECO:0007669"/>
    <property type="project" value="UniProtKB-KW"/>
</dbReference>
<dbReference type="GO" id="GO:0009252">
    <property type="term" value="P:peptidoglycan biosynthetic process"/>
    <property type="evidence" value="ECO:0007669"/>
    <property type="project" value="UniProtKB-UniRule"/>
</dbReference>
<dbReference type="GO" id="GO:0008360">
    <property type="term" value="P:regulation of cell shape"/>
    <property type="evidence" value="ECO:0007669"/>
    <property type="project" value="UniProtKB-KW"/>
</dbReference>
<dbReference type="CDD" id="cd06852">
    <property type="entry name" value="GT_MraY"/>
    <property type="match status" value="1"/>
</dbReference>
<dbReference type="HAMAP" id="MF_00038">
    <property type="entry name" value="MraY"/>
    <property type="match status" value="1"/>
</dbReference>
<dbReference type="InterPro" id="IPR000715">
    <property type="entry name" value="Glycosyl_transferase_4"/>
</dbReference>
<dbReference type="InterPro" id="IPR003524">
    <property type="entry name" value="PNAcMuramoyl-5peptid_Trfase"/>
</dbReference>
<dbReference type="InterPro" id="IPR018480">
    <property type="entry name" value="PNAcMuramoyl-5peptid_Trfase_CS"/>
</dbReference>
<dbReference type="NCBIfam" id="TIGR00445">
    <property type="entry name" value="mraY"/>
    <property type="match status" value="1"/>
</dbReference>
<dbReference type="PANTHER" id="PTHR22926">
    <property type="entry name" value="PHOSPHO-N-ACETYLMURAMOYL-PENTAPEPTIDE-TRANSFERASE"/>
    <property type="match status" value="1"/>
</dbReference>
<dbReference type="PANTHER" id="PTHR22926:SF5">
    <property type="entry name" value="PHOSPHO-N-ACETYLMURAMOYL-PENTAPEPTIDE-TRANSFERASE HOMOLOG"/>
    <property type="match status" value="1"/>
</dbReference>
<dbReference type="Pfam" id="PF00953">
    <property type="entry name" value="Glycos_transf_4"/>
    <property type="match status" value="1"/>
</dbReference>
<dbReference type="Pfam" id="PF10555">
    <property type="entry name" value="MraY_sig1"/>
    <property type="match status" value="1"/>
</dbReference>
<dbReference type="PROSITE" id="PS01347">
    <property type="entry name" value="MRAY_1"/>
    <property type="match status" value="1"/>
</dbReference>
<dbReference type="PROSITE" id="PS01348">
    <property type="entry name" value="MRAY_2"/>
    <property type="match status" value="1"/>
</dbReference>
<protein>
    <recommendedName>
        <fullName evidence="1">Phospho-N-acetylmuramoyl-pentapeptide-transferase</fullName>
        <ecNumber evidence="1">2.7.8.13</ecNumber>
    </recommendedName>
    <alternativeName>
        <fullName evidence="1">UDP-MurNAc-pentapeptide phosphotransferase</fullName>
    </alternativeName>
</protein>
<gene>
    <name evidence="1" type="primary">mraY</name>
    <name type="ordered locus">SPD_0307</name>
</gene>
<proteinExistence type="inferred from homology"/>
<accession>Q04MC4</accession>
<reference key="1">
    <citation type="journal article" date="2007" name="J. Bacteriol.">
        <title>Genome sequence of Avery's virulent serotype 2 strain D39 of Streptococcus pneumoniae and comparison with that of unencapsulated laboratory strain R6.</title>
        <authorList>
            <person name="Lanie J.A."/>
            <person name="Ng W.-L."/>
            <person name="Kazmierczak K.M."/>
            <person name="Andrzejewski T.M."/>
            <person name="Davidsen T.M."/>
            <person name="Wayne K.J."/>
            <person name="Tettelin H."/>
            <person name="Glass J.I."/>
            <person name="Winkler M.E."/>
        </authorList>
    </citation>
    <scope>NUCLEOTIDE SEQUENCE [LARGE SCALE GENOMIC DNA]</scope>
    <source>
        <strain>D39 / NCTC 7466</strain>
    </source>
</reference>